<proteinExistence type="inferred from homology"/>
<name>SMRB_SHIDS</name>
<sequence length="183" mass="20944">MKKKTTLSEEDQALFRQLMAGTRKIKQDTIVHRPQSKKISEVPVKRLIQEQADASHYFSDEFQPLLNTEGPVKYVRPDVSHFEAKKLRRGDYSPELFLDLHGLTQLQAKQELGALIAACRREHVFCACVMHGHGKHILKQQTPLWLAQHPHVMAFHQAPKEYGGDAALLVLIEVEEWLPPELP</sequence>
<protein>
    <recommendedName>
        <fullName evidence="1">Ribosome rescue factor SmrB</fullName>
        <ecNumber evidence="1">3.1.-.-</ecNumber>
    </recommendedName>
</protein>
<keyword id="KW-0255">Endonuclease</keyword>
<keyword id="KW-0378">Hydrolase</keyword>
<keyword id="KW-0540">Nuclease</keyword>
<keyword id="KW-1185">Reference proteome</keyword>
<keyword id="KW-0694">RNA-binding</keyword>
<keyword id="KW-0699">rRNA-binding</keyword>
<dbReference type="EC" id="3.1.-.-" evidence="1"/>
<dbReference type="EMBL" id="CP000034">
    <property type="protein sequence ID" value="ABB62598.1"/>
    <property type="molecule type" value="Genomic_DNA"/>
</dbReference>
<dbReference type="RefSeq" id="WP_000730818.1">
    <property type="nucleotide sequence ID" value="NC_007606.1"/>
</dbReference>
<dbReference type="RefSeq" id="YP_404090.1">
    <property type="nucleotide sequence ID" value="NC_007606.1"/>
</dbReference>
<dbReference type="SMR" id="Q32DK6"/>
<dbReference type="STRING" id="300267.SDY_2529"/>
<dbReference type="EnsemblBacteria" id="ABB62598">
    <property type="protein sequence ID" value="ABB62598"/>
    <property type="gene ID" value="SDY_2529"/>
</dbReference>
<dbReference type="KEGG" id="sdy:SDY_2529"/>
<dbReference type="PATRIC" id="fig|300267.13.peg.3046"/>
<dbReference type="HOGENOM" id="CLU_055978_4_0_6"/>
<dbReference type="Proteomes" id="UP000002716">
    <property type="component" value="Chromosome"/>
</dbReference>
<dbReference type="GO" id="GO:0004521">
    <property type="term" value="F:RNA endonuclease activity"/>
    <property type="evidence" value="ECO:0007669"/>
    <property type="project" value="UniProtKB-UniRule"/>
</dbReference>
<dbReference type="GO" id="GO:0019843">
    <property type="term" value="F:rRNA binding"/>
    <property type="evidence" value="ECO:0007669"/>
    <property type="project" value="UniProtKB-UniRule"/>
</dbReference>
<dbReference type="GO" id="GO:0072344">
    <property type="term" value="P:rescue of stalled ribosome"/>
    <property type="evidence" value="ECO:0007669"/>
    <property type="project" value="UniProtKB-UniRule"/>
</dbReference>
<dbReference type="Gene3D" id="3.30.1370.110">
    <property type="match status" value="1"/>
</dbReference>
<dbReference type="HAMAP" id="MF_01042">
    <property type="entry name" value="SmrB"/>
    <property type="match status" value="1"/>
</dbReference>
<dbReference type="InterPro" id="IPR002625">
    <property type="entry name" value="Smr_dom"/>
</dbReference>
<dbReference type="InterPro" id="IPR036063">
    <property type="entry name" value="Smr_dom_sf"/>
</dbReference>
<dbReference type="InterPro" id="IPR022990">
    <property type="entry name" value="SmrB-like"/>
</dbReference>
<dbReference type="NCBIfam" id="NF003432">
    <property type="entry name" value="PRK04946.1"/>
    <property type="match status" value="1"/>
</dbReference>
<dbReference type="PANTHER" id="PTHR35562">
    <property type="entry name" value="DNA ENDONUCLEASE SMRA-RELATED"/>
    <property type="match status" value="1"/>
</dbReference>
<dbReference type="PANTHER" id="PTHR35562:SF1">
    <property type="entry name" value="UPF0115 PROTEIN YFCN"/>
    <property type="match status" value="1"/>
</dbReference>
<dbReference type="Pfam" id="PF01713">
    <property type="entry name" value="Smr"/>
    <property type="match status" value="1"/>
</dbReference>
<dbReference type="SMART" id="SM00463">
    <property type="entry name" value="SMR"/>
    <property type="match status" value="1"/>
</dbReference>
<dbReference type="SUPFAM" id="SSF160443">
    <property type="entry name" value="SMR domain-like"/>
    <property type="match status" value="1"/>
</dbReference>
<dbReference type="PROSITE" id="PS50828">
    <property type="entry name" value="SMR"/>
    <property type="match status" value="1"/>
</dbReference>
<reference key="1">
    <citation type="journal article" date="2005" name="Nucleic Acids Res.">
        <title>Genome dynamics and diversity of Shigella species, the etiologic agents of bacillary dysentery.</title>
        <authorList>
            <person name="Yang F."/>
            <person name="Yang J."/>
            <person name="Zhang X."/>
            <person name="Chen L."/>
            <person name="Jiang Y."/>
            <person name="Yan Y."/>
            <person name="Tang X."/>
            <person name="Wang J."/>
            <person name="Xiong Z."/>
            <person name="Dong J."/>
            <person name="Xue Y."/>
            <person name="Zhu Y."/>
            <person name="Xu X."/>
            <person name="Sun L."/>
            <person name="Chen S."/>
            <person name="Nie H."/>
            <person name="Peng J."/>
            <person name="Xu J."/>
            <person name="Wang Y."/>
            <person name="Yuan Z."/>
            <person name="Wen Y."/>
            <person name="Yao Z."/>
            <person name="Shen Y."/>
            <person name="Qiang B."/>
            <person name="Hou Y."/>
            <person name="Yu J."/>
            <person name="Jin Q."/>
        </authorList>
    </citation>
    <scope>NUCLEOTIDE SEQUENCE [LARGE SCALE GENOMIC DNA]</scope>
    <source>
        <strain>Sd197</strain>
    </source>
</reference>
<accession>Q32DK6</accession>
<comment type="function">
    <text evidence="1">Acts as a ribosome collision sensor. Detects stalled/collided disomes (pairs of ribosomes where the leading ribosome is stalled and a second ribosome has collided with it) and endonucleolytically cleaves mRNA at the 5' boundary of the stalled ribosome. Stalled/collided disomes form a new interface (primarily via the 30S subunits) that binds SmrB. Cleaved mRNA becomes available for tmRNA ligation, leading to ribosomal subunit dissociation and rescue of stalled ribosomes.</text>
</comment>
<comment type="subunit">
    <text evidence="1">Associates with collided ribosomes, but not with correctly translating polysomes.</text>
</comment>
<comment type="similarity">
    <text evidence="1">Belongs to the SmrB family.</text>
</comment>
<feature type="chain" id="PRO_1000084366" description="Ribosome rescue factor SmrB">
    <location>
        <begin position="1"/>
        <end position="183"/>
    </location>
</feature>
<feature type="domain" description="Smr" evidence="1">
    <location>
        <begin position="98"/>
        <end position="173"/>
    </location>
</feature>
<evidence type="ECO:0000255" key="1">
    <source>
        <dbReference type="HAMAP-Rule" id="MF_01042"/>
    </source>
</evidence>
<gene>
    <name evidence="1" type="primary">smrB</name>
    <name type="ordered locus">SDY_2529</name>
</gene>
<organism>
    <name type="scientific">Shigella dysenteriae serotype 1 (strain Sd197)</name>
    <dbReference type="NCBI Taxonomy" id="300267"/>
    <lineage>
        <taxon>Bacteria</taxon>
        <taxon>Pseudomonadati</taxon>
        <taxon>Pseudomonadota</taxon>
        <taxon>Gammaproteobacteria</taxon>
        <taxon>Enterobacterales</taxon>
        <taxon>Enterobacteriaceae</taxon>
        <taxon>Shigella</taxon>
    </lineage>
</organism>